<organism>
    <name type="scientific">Yersinia pestis</name>
    <dbReference type="NCBI Taxonomy" id="632"/>
    <lineage>
        <taxon>Bacteria</taxon>
        <taxon>Pseudomonadati</taxon>
        <taxon>Pseudomonadota</taxon>
        <taxon>Gammaproteobacteria</taxon>
        <taxon>Enterobacterales</taxon>
        <taxon>Yersiniaceae</taxon>
        <taxon>Yersinia</taxon>
    </lineage>
</organism>
<comment type="function">
    <text evidence="1">Translocates 4-amino-4-deoxy-L-arabinose-phosphoundecaprenol (alpha-L-Ara4N-phosphoundecaprenol) from the cytoplasmic to the periplasmic side of the inner membrane.</text>
</comment>
<comment type="pathway">
    <text evidence="1">Bacterial outer membrane biogenesis; lipopolysaccharide biosynthesis.</text>
</comment>
<comment type="subunit">
    <text evidence="1">Heterodimer of ArnE and ArnF.</text>
</comment>
<comment type="subcellular location">
    <subcellularLocation>
        <location evidence="1">Cell inner membrane</location>
        <topology evidence="1">Multi-pass membrane protein</topology>
    </subcellularLocation>
</comment>
<comment type="similarity">
    <text evidence="1">Belongs to the ArnF family.</text>
</comment>
<comment type="sequence caution" evidence="2">
    <conflict type="erroneous initiation">
        <sequence resource="EMBL-CDS" id="AAM85490"/>
    </conflict>
</comment>
<comment type="sequence caution" evidence="2">
    <conflict type="erroneous initiation">
        <sequence resource="EMBL-CDS" id="AAS62409"/>
    </conflict>
</comment>
<protein>
    <recommendedName>
        <fullName evidence="1">Probable 4-amino-4-deoxy-L-arabinose-phosphoundecaprenol flippase subunit ArnF</fullName>
        <shortName evidence="1">L-Ara4N-phosphoundecaprenol flippase subunit ArnF</shortName>
    </recommendedName>
    <alternativeName>
        <fullName evidence="1">Undecaprenyl phosphate-aminoarabinose flippase subunit ArnF</fullName>
    </alternativeName>
</protein>
<reference key="1">
    <citation type="journal article" date="2001" name="Nature">
        <title>Genome sequence of Yersinia pestis, the causative agent of plague.</title>
        <authorList>
            <person name="Parkhill J."/>
            <person name="Wren B.W."/>
            <person name="Thomson N.R."/>
            <person name="Titball R.W."/>
            <person name="Holden M.T.G."/>
            <person name="Prentice M.B."/>
            <person name="Sebaihia M."/>
            <person name="James K.D."/>
            <person name="Churcher C.M."/>
            <person name="Mungall K.L."/>
            <person name="Baker S."/>
            <person name="Basham D."/>
            <person name="Bentley S.D."/>
            <person name="Brooks K."/>
            <person name="Cerdeno-Tarraga A.-M."/>
            <person name="Chillingworth T."/>
            <person name="Cronin A."/>
            <person name="Davies R.M."/>
            <person name="Davis P."/>
            <person name="Dougan G."/>
            <person name="Feltwell T."/>
            <person name="Hamlin N."/>
            <person name="Holroyd S."/>
            <person name="Jagels K."/>
            <person name="Karlyshev A.V."/>
            <person name="Leather S."/>
            <person name="Moule S."/>
            <person name="Oyston P.C.F."/>
            <person name="Quail M.A."/>
            <person name="Rutherford K.M."/>
            <person name="Simmonds M."/>
            <person name="Skelton J."/>
            <person name="Stevens K."/>
            <person name="Whitehead S."/>
            <person name="Barrell B.G."/>
        </authorList>
    </citation>
    <scope>NUCLEOTIDE SEQUENCE [LARGE SCALE GENOMIC DNA]</scope>
    <source>
        <strain>CO-92 / Biovar Orientalis</strain>
    </source>
</reference>
<reference key="2">
    <citation type="journal article" date="2002" name="J. Bacteriol.">
        <title>Genome sequence of Yersinia pestis KIM.</title>
        <authorList>
            <person name="Deng W."/>
            <person name="Burland V."/>
            <person name="Plunkett G. III"/>
            <person name="Boutin A."/>
            <person name="Mayhew G.F."/>
            <person name="Liss P."/>
            <person name="Perna N.T."/>
            <person name="Rose D.J."/>
            <person name="Mau B."/>
            <person name="Zhou S."/>
            <person name="Schwartz D.C."/>
            <person name="Fetherston J.D."/>
            <person name="Lindler L.E."/>
            <person name="Brubaker R.R."/>
            <person name="Plano G.V."/>
            <person name="Straley S.C."/>
            <person name="McDonough K.A."/>
            <person name="Nilles M.L."/>
            <person name="Matson J.S."/>
            <person name="Blattner F.R."/>
            <person name="Perry R.D."/>
        </authorList>
    </citation>
    <scope>NUCLEOTIDE SEQUENCE [LARGE SCALE GENOMIC DNA]</scope>
    <source>
        <strain>KIM10+ / Biovar Mediaevalis</strain>
    </source>
</reference>
<reference key="3">
    <citation type="journal article" date="2004" name="DNA Res.">
        <title>Complete genome sequence of Yersinia pestis strain 91001, an isolate avirulent to humans.</title>
        <authorList>
            <person name="Song Y."/>
            <person name="Tong Z."/>
            <person name="Wang J."/>
            <person name="Wang L."/>
            <person name="Guo Z."/>
            <person name="Han Y."/>
            <person name="Zhang J."/>
            <person name="Pei D."/>
            <person name="Zhou D."/>
            <person name="Qin H."/>
            <person name="Pang X."/>
            <person name="Han Y."/>
            <person name="Zhai J."/>
            <person name="Li M."/>
            <person name="Cui B."/>
            <person name="Qi Z."/>
            <person name="Jin L."/>
            <person name="Dai R."/>
            <person name="Chen F."/>
            <person name="Li S."/>
            <person name="Ye C."/>
            <person name="Du Z."/>
            <person name="Lin W."/>
            <person name="Wang J."/>
            <person name="Yu J."/>
            <person name="Yang H."/>
            <person name="Wang J."/>
            <person name="Huang P."/>
            <person name="Yang R."/>
        </authorList>
    </citation>
    <scope>NUCLEOTIDE SEQUENCE [LARGE SCALE GENOMIC DNA]</scope>
    <source>
        <strain>91001 / Biovar Mediaevalis</strain>
    </source>
</reference>
<gene>
    <name evidence="1" type="primary">arnF</name>
    <name type="ordered locus">YPO2416</name>
    <name type="ordered locus">y1923</name>
    <name type="ordered locus">YP_2203</name>
</gene>
<proteinExistence type="inferred from homology"/>
<sequence>MKGYLWGGASVVLVTVAQLVLKWGMMNIPLLSLADINVQFLTMYFVQLASVMCGLMGYALSMLCWFFALRYLPLNRAYPLLSLSYALVYLGAVLLPWFNEPATLLKTLGAGFILLGIWLINIKPIKAS</sequence>
<name>ARNF_YERPE</name>
<accession>Q8ZDY0</accession>
<accession>Q0WEA9</accession>
<keyword id="KW-0997">Cell inner membrane</keyword>
<keyword id="KW-1003">Cell membrane</keyword>
<keyword id="KW-0441">Lipid A biosynthesis</keyword>
<keyword id="KW-0444">Lipid biosynthesis</keyword>
<keyword id="KW-0443">Lipid metabolism</keyword>
<keyword id="KW-0448">Lipopolysaccharide biosynthesis</keyword>
<keyword id="KW-0472">Membrane</keyword>
<keyword id="KW-1185">Reference proteome</keyword>
<keyword id="KW-0812">Transmembrane</keyword>
<keyword id="KW-1133">Transmembrane helix</keyword>
<keyword id="KW-0813">Transport</keyword>
<feature type="chain" id="PRO_0000218160" description="Probable 4-amino-4-deoxy-L-arabinose-phosphoundecaprenol flippase subunit ArnF">
    <location>
        <begin position="1"/>
        <end position="128"/>
    </location>
</feature>
<feature type="topological domain" description="Cytoplasmic" evidence="1">
    <location>
        <begin position="1"/>
        <end position="10"/>
    </location>
</feature>
<feature type="transmembrane region" description="Helical" evidence="1">
    <location>
        <begin position="11"/>
        <end position="31"/>
    </location>
</feature>
<feature type="topological domain" description="Periplasmic" evidence="1">
    <location>
        <begin position="32"/>
        <end position="47"/>
    </location>
</feature>
<feature type="transmembrane region" description="Helical" evidence="1">
    <location>
        <begin position="48"/>
        <end position="68"/>
    </location>
</feature>
<feature type="topological domain" description="Cytoplasmic" evidence="1">
    <location>
        <begin position="69"/>
        <end position="77"/>
    </location>
</feature>
<feature type="transmembrane region" description="Helical" evidence="1">
    <location>
        <begin position="78"/>
        <end position="98"/>
    </location>
</feature>
<feature type="topological domain" description="Periplasmic" evidence="1">
    <location>
        <begin position="99"/>
        <end position="101"/>
    </location>
</feature>
<feature type="transmembrane region" description="Helical" evidence="1">
    <location>
        <begin position="102"/>
        <end position="122"/>
    </location>
</feature>
<feature type="topological domain" description="Cytoplasmic" evidence="1">
    <location>
        <begin position="123"/>
        <end position="128"/>
    </location>
</feature>
<evidence type="ECO:0000255" key="1">
    <source>
        <dbReference type="HAMAP-Rule" id="MF_00538"/>
    </source>
</evidence>
<evidence type="ECO:0000305" key="2"/>
<dbReference type="EMBL" id="AL590842">
    <property type="protein sequence ID" value="CAL21043.1"/>
    <property type="molecule type" value="Genomic_DNA"/>
</dbReference>
<dbReference type="EMBL" id="AE009952">
    <property type="protein sequence ID" value="AAM85490.1"/>
    <property type="status" value="ALT_INIT"/>
    <property type="molecule type" value="Genomic_DNA"/>
</dbReference>
<dbReference type="EMBL" id="AE017042">
    <property type="protein sequence ID" value="AAS62409.1"/>
    <property type="status" value="ALT_INIT"/>
    <property type="molecule type" value="Genomic_DNA"/>
</dbReference>
<dbReference type="PIR" id="AH0294">
    <property type="entry name" value="AH0294"/>
</dbReference>
<dbReference type="RefSeq" id="WP_002211819.1">
    <property type="nucleotide sequence ID" value="NZ_WUCL01000026.1"/>
</dbReference>
<dbReference type="RefSeq" id="YP_002347379.1">
    <property type="nucleotide sequence ID" value="NC_003143.1"/>
</dbReference>
<dbReference type="STRING" id="214092.YPO2416"/>
<dbReference type="PaxDb" id="214092-YPO2416"/>
<dbReference type="EnsemblBacteria" id="AAS62409">
    <property type="protein sequence ID" value="AAS62409"/>
    <property type="gene ID" value="YP_2203"/>
</dbReference>
<dbReference type="GeneID" id="57976261"/>
<dbReference type="KEGG" id="ype:YPO2416"/>
<dbReference type="KEGG" id="ypk:y1923"/>
<dbReference type="KEGG" id="ypm:YP_2203"/>
<dbReference type="PATRIC" id="fig|214092.21.peg.2824"/>
<dbReference type="eggNOG" id="COG2076">
    <property type="taxonomic scope" value="Bacteria"/>
</dbReference>
<dbReference type="HOGENOM" id="CLU_131462_1_0_6"/>
<dbReference type="OMA" id="NEPMSLR"/>
<dbReference type="OrthoDB" id="5592809at2"/>
<dbReference type="UniPathway" id="UPA00030"/>
<dbReference type="Proteomes" id="UP000000815">
    <property type="component" value="Chromosome"/>
</dbReference>
<dbReference type="Proteomes" id="UP000001019">
    <property type="component" value="Chromosome"/>
</dbReference>
<dbReference type="Proteomes" id="UP000002490">
    <property type="component" value="Chromosome"/>
</dbReference>
<dbReference type="GO" id="GO:0005886">
    <property type="term" value="C:plasma membrane"/>
    <property type="evidence" value="ECO:0000318"/>
    <property type="project" value="GO_Central"/>
</dbReference>
<dbReference type="GO" id="GO:1901505">
    <property type="term" value="F:carbohydrate derivative transmembrane transporter activity"/>
    <property type="evidence" value="ECO:0007669"/>
    <property type="project" value="InterPro"/>
</dbReference>
<dbReference type="GO" id="GO:0022857">
    <property type="term" value="F:transmembrane transporter activity"/>
    <property type="evidence" value="ECO:0000318"/>
    <property type="project" value="GO_Central"/>
</dbReference>
<dbReference type="GO" id="GO:0009245">
    <property type="term" value="P:lipid A biosynthetic process"/>
    <property type="evidence" value="ECO:0007669"/>
    <property type="project" value="UniProtKB-UniRule"/>
</dbReference>
<dbReference type="GO" id="GO:0009103">
    <property type="term" value="P:lipopolysaccharide biosynthetic process"/>
    <property type="evidence" value="ECO:0007669"/>
    <property type="project" value="UniProtKB-UniRule"/>
</dbReference>
<dbReference type="GO" id="GO:0055085">
    <property type="term" value="P:transmembrane transport"/>
    <property type="evidence" value="ECO:0000318"/>
    <property type="project" value="GO_Central"/>
</dbReference>
<dbReference type="Gene3D" id="1.10.3730.20">
    <property type="match status" value="1"/>
</dbReference>
<dbReference type="HAMAP" id="MF_00538">
    <property type="entry name" value="Flippase_ArnF"/>
    <property type="match status" value="1"/>
</dbReference>
<dbReference type="InterPro" id="IPR022832">
    <property type="entry name" value="Flippase_ArnF"/>
</dbReference>
<dbReference type="InterPro" id="IPR000390">
    <property type="entry name" value="Small_drug/metabolite_transptr"/>
</dbReference>
<dbReference type="NCBIfam" id="NF002816">
    <property type="entry name" value="PRK02971.1-2"/>
    <property type="match status" value="1"/>
</dbReference>
<dbReference type="PANTHER" id="PTHR30561:SF9">
    <property type="entry name" value="4-AMINO-4-DEOXY-L-ARABINOSE-PHOSPHOUNDECAPRENOL FLIPPASE SUBUNIT ARNF-RELATED"/>
    <property type="match status" value="1"/>
</dbReference>
<dbReference type="PANTHER" id="PTHR30561">
    <property type="entry name" value="SMR FAMILY PROTON-DEPENDENT DRUG EFFLUX TRANSPORTER SUGE"/>
    <property type="match status" value="1"/>
</dbReference>
<dbReference type="SUPFAM" id="SSF103481">
    <property type="entry name" value="Multidrug resistance efflux transporter EmrE"/>
    <property type="match status" value="1"/>
</dbReference>